<reference key="1">
    <citation type="journal article" date="2006" name="Proc. Natl. Acad. Sci. U.S.A.">
        <title>Burkholderia xenovorans LB400 harbors a multi-replicon, 9.73-Mbp genome shaped for versatility.</title>
        <authorList>
            <person name="Chain P.S.G."/>
            <person name="Denef V.J."/>
            <person name="Konstantinidis K.T."/>
            <person name="Vergez L.M."/>
            <person name="Agullo L."/>
            <person name="Reyes V.L."/>
            <person name="Hauser L."/>
            <person name="Cordova M."/>
            <person name="Gomez L."/>
            <person name="Gonzalez M."/>
            <person name="Land M."/>
            <person name="Lao V."/>
            <person name="Larimer F."/>
            <person name="LiPuma J.J."/>
            <person name="Mahenthiralingam E."/>
            <person name="Malfatti S.A."/>
            <person name="Marx C.J."/>
            <person name="Parnell J.J."/>
            <person name="Ramette A."/>
            <person name="Richardson P."/>
            <person name="Seeger M."/>
            <person name="Smith D."/>
            <person name="Spilker T."/>
            <person name="Sul W.J."/>
            <person name="Tsoi T.V."/>
            <person name="Ulrich L.E."/>
            <person name="Zhulin I.B."/>
            <person name="Tiedje J.M."/>
        </authorList>
    </citation>
    <scope>NUCLEOTIDE SEQUENCE [LARGE SCALE GENOMIC DNA]</scope>
    <source>
        <strain>LB400</strain>
    </source>
</reference>
<comment type="similarity">
    <text evidence="1">Belongs to the bacterial ribosomal protein bL34 family.</text>
</comment>
<evidence type="ECO:0000255" key="1">
    <source>
        <dbReference type="HAMAP-Rule" id="MF_00391"/>
    </source>
</evidence>
<evidence type="ECO:0000305" key="2"/>
<keyword id="KW-1185">Reference proteome</keyword>
<keyword id="KW-0687">Ribonucleoprotein</keyword>
<keyword id="KW-0689">Ribosomal protein</keyword>
<feature type="chain" id="PRO_1000013304" description="Large ribosomal subunit protein bL34">
    <location>
        <begin position="1"/>
        <end position="44"/>
    </location>
</feature>
<name>RL34_PARXL</name>
<sequence>MKRTYQPSVTRRKRTHGFRVRMKTAGGRKVINARRAKGRKRLAI</sequence>
<protein>
    <recommendedName>
        <fullName evidence="1">Large ribosomal subunit protein bL34</fullName>
    </recommendedName>
    <alternativeName>
        <fullName evidence="2">50S ribosomal protein L34</fullName>
    </alternativeName>
</protein>
<dbReference type="EMBL" id="CP000270">
    <property type="protein sequence ID" value="ABE32968.1"/>
    <property type="molecule type" value="Genomic_DNA"/>
</dbReference>
<dbReference type="RefSeq" id="WP_004198824.1">
    <property type="nucleotide sequence ID" value="NZ_CP008760.1"/>
</dbReference>
<dbReference type="SMR" id="Q13SH1"/>
<dbReference type="STRING" id="266265.Bxe_A4463"/>
<dbReference type="GeneID" id="98107775"/>
<dbReference type="KEGG" id="bxb:DR64_2135"/>
<dbReference type="KEGG" id="bxe:Bxe_A4463"/>
<dbReference type="eggNOG" id="COG0230">
    <property type="taxonomic scope" value="Bacteria"/>
</dbReference>
<dbReference type="OrthoDB" id="9804164at2"/>
<dbReference type="Proteomes" id="UP000001817">
    <property type="component" value="Chromosome 1"/>
</dbReference>
<dbReference type="GO" id="GO:1990904">
    <property type="term" value="C:ribonucleoprotein complex"/>
    <property type="evidence" value="ECO:0007669"/>
    <property type="project" value="UniProtKB-KW"/>
</dbReference>
<dbReference type="GO" id="GO:0005840">
    <property type="term" value="C:ribosome"/>
    <property type="evidence" value="ECO:0007669"/>
    <property type="project" value="UniProtKB-KW"/>
</dbReference>
<dbReference type="GO" id="GO:0003735">
    <property type="term" value="F:structural constituent of ribosome"/>
    <property type="evidence" value="ECO:0007669"/>
    <property type="project" value="InterPro"/>
</dbReference>
<dbReference type="GO" id="GO:0006412">
    <property type="term" value="P:translation"/>
    <property type="evidence" value="ECO:0007669"/>
    <property type="project" value="UniProtKB-UniRule"/>
</dbReference>
<dbReference type="FunFam" id="1.10.287.3980:FF:000001">
    <property type="entry name" value="Mitochondrial ribosomal protein L34"/>
    <property type="match status" value="1"/>
</dbReference>
<dbReference type="Gene3D" id="1.10.287.3980">
    <property type="match status" value="1"/>
</dbReference>
<dbReference type="HAMAP" id="MF_00391">
    <property type="entry name" value="Ribosomal_bL34"/>
    <property type="match status" value="1"/>
</dbReference>
<dbReference type="InterPro" id="IPR000271">
    <property type="entry name" value="Ribosomal_bL34"/>
</dbReference>
<dbReference type="InterPro" id="IPR020939">
    <property type="entry name" value="Ribosomal_bL34_CS"/>
</dbReference>
<dbReference type="NCBIfam" id="TIGR01030">
    <property type="entry name" value="rpmH_bact"/>
    <property type="match status" value="1"/>
</dbReference>
<dbReference type="PANTHER" id="PTHR14503:SF4">
    <property type="entry name" value="LARGE RIBOSOMAL SUBUNIT PROTEIN BL34M"/>
    <property type="match status" value="1"/>
</dbReference>
<dbReference type="PANTHER" id="PTHR14503">
    <property type="entry name" value="MITOCHONDRIAL RIBOSOMAL PROTEIN 34 FAMILY MEMBER"/>
    <property type="match status" value="1"/>
</dbReference>
<dbReference type="Pfam" id="PF00468">
    <property type="entry name" value="Ribosomal_L34"/>
    <property type="match status" value="1"/>
</dbReference>
<dbReference type="PROSITE" id="PS00784">
    <property type="entry name" value="RIBOSOMAL_L34"/>
    <property type="match status" value="1"/>
</dbReference>
<organism>
    <name type="scientific">Paraburkholderia xenovorans (strain LB400)</name>
    <dbReference type="NCBI Taxonomy" id="266265"/>
    <lineage>
        <taxon>Bacteria</taxon>
        <taxon>Pseudomonadati</taxon>
        <taxon>Pseudomonadota</taxon>
        <taxon>Betaproteobacteria</taxon>
        <taxon>Burkholderiales</taxon>
        <taxon>Burkholderiaceae</taxon>
        <taxon>Paraburkholderia</taxon>
    </lineage>
</organism>
<gene>
    <name evidence="1" type="primary">rpmH</name>
    <name type="ordered locus">Bxeno_A4430</name>
    <name type="ORF">Bxe_A4463</name>
</gene>
<proteinExistence type="inferred from homology"/>
<accession>Q13SH1</accession>